<keyword id="KW-0028">Amino-acid biosynthesis</keyword>
<keyword id="KW-0100">Branched-chain amino acid biosynthesis</keyword>
<keyword id="KW-0460">Magnesium</keyword>
<keyword id="KW-0479">Metal-binding</keyword>
<keyword id="KW-0521">NADP</keyword>
<keyword id="KW-0560">Oxidoreductase</keyword>
<organism>
    <name type="scientific">Mycobacterium avium (strain 104)</name>
    <dbReference type="NCBI Taxonomy" id="243243"/>
    <lineage>
        <taxon>Bacteria</taxon>
        <taxon>Bacillati</taxon>
        <taxon>Actinomycetota</taxon>
        <taxon>Actinomycetes</taxon>
        <taxon>Mycobacteriales</taxon>
        <taxon>Mycobacteriaceae</taxon>
        <taxon>Mycobacterium</taxon>
        <taxon>Mycobacterium avium complex (MAC)</taxon>
    </lineage>
</organism>
<feature type="chain" id="PRO_1000050537" description="Ketol-acid reductoisomerase (NADP(+))">
    <location>
        <begin position="1"/>
        <end position="333"/>
    </location>
</feature>
<feature type="domain" description="KARI N-terminal Rossmann" evidence="2">
    <location>
        <begin position="1"/>
        <end position="179"/>
    </location>
</feature>
<feature type="domain" description="KARI C-terminal knotted" evidence="3">
    <location>
        <begin position="180"/>
        <end position="325"/>
    </location>
</feature>
<feature type="active site" evidence="1">
    <location>
        <position position="105"/>
    </location>
</feature>
<feature type="binding site" evidence="1">
    <location>
        <begin position="22"/>
        <end position="25"/>
    </location>
    <ligand>
        <name>NADP(+)</name>
        <dbReference type="ChEBI" id="CHEBI:58349"/>
    </ligand>
</feature>
<feature type="binding site" evidence="1">
    <location>
        <position position="45"/>
    </location>
    <ligand>
        <name>NADP(+)</name>
        <dbReference type="ChEBI" id="CHEBI:58349"/>
    </ligand>
</feature>
<feature type="binding site" evidence="1">
    <location>
        <position position="48"/>
    </location>
    <ligand>
        <name>NADP(+)</name>
        <dbReference type="ChEBI" id="CHEBI:58349"/>
    </ligand>
</feature>
<feature type="binding site" evidence="1">
    <location>
        <position position="50"/>
    </location>
    <ligand>
        <name>NADP(+)</name>
        <dbReference type="ChEBI" id="CHEBI:58349"/>
    </ligand>
</feature>
<feature type="binding site" evidence="1">
    <location>
        <begin position="80"/>
        <end position="83"/>
    </location>
    <ligand>
        <name>NADP(+)</name>
        <dbReference type="ChEBI" id="CHEBI:58349"/>
    </ligand>
</feature>
<feature type="binding site" evidence="1">
    <location>
        <position position="131"/>
    </location>
    <ligand>
        <name>NADP(+)</name>
        <dbReference type="ChEBI" id="CHEBI:58349"/>
    </ligand>
</feature>
<feature type="binding site" evidence="1">
    <location>
        <position position="188"/>
    </location>
    <ligand>
        <name>Mg(2+)</name>
        <dbReference type="ChEBI" id="CHEBI:18420"/>
        <label>1</label>
    </ligand>
</feature>
<feature type="binding site" evidence="1">
    <location>
        <position position="188"/>
    </location>
    <ligand>
        <name>Mg(2+)</name>
        <dbReference type="ChEBI" id="CHEBI:18420"/>
        <label>2</label>
    </ligand>
</feature>
<feature type="binding site" evidence="1">
    <location>
        <position position="192"/>
    </location>
    <ligand>
        <name>Mg(2+)</name>
        <dbReference type="ChEBI" id="CHEBI:18420"/>
        <label>1</label>
    </ligand>
</feature>
<feature type="binding site" evidence="1">
    <location>
        <position position="224"/>
    </location>
    <ligand>
        <name>Mg(2+)</name>
        <dbReference type="ChEBI" id="CHEBI:18420"/>
        <label>2</label>
    </ligand>
</feature>
<feature type="binding site" evidence="1">
    <location>
        <position position="228"/>
    </location>
    <ligand>
        <name>Mg(2+)</name>
        <dbReference type="ChEBI" id="CHEBI:18420"/>
        <label>2</label>
    </ligand>
</feature>
<feature type="binding site" evidence="1">
    <location>
        <position position="249"/>
    </location>
    <ligand>
        <name>substrate</name>
    </ligand>
</feature>
<gene>
    <name evidence="1" type="primary">ilvC</name>
    <name type="ordered locus">MAV_3850</name>
</gene>
<name>ILVC_MYCA1</name>
<evidence type="ECO:0000255" key="1">
    <source>
        <dbReference type="HAMAP-Rule" id="MF_00435"/>
    </source>
</evidence>
<evidence type="ECO:0000255" key="2">
    <source>
        <dbReference type="PROSITE-ProRule" id="PRU01197"/>
    </source>
</evidence>
<evidence type="ECO:0000255" key="3">
    <source>
        <dbReference type="PROSITE-ProRule" id="PRU01198"/>
    </source>
</evidence>
<comment type="function">
    <text evidence="1">Involved in the biosynthesis of branched-chain amino acids (BCAA). Catalyzes an alkyl-migration followed by a ketol-acid reduction of (S)-2-acetolactate (S2AL) to yield (R)-2,3-dihydroxy-isovalerate. In the isomerase reaction, S2AL is rearranged via a Mg-dependent methyl migration to produce 3-hydroxy-3-methyl-2-ketobutyrate (HMKB). In the reductase reaction, this 2-ketoacid undergoes a metal-dependent reduction by NADPH to yield (R)-2,3-dihydroxy-isovalerate.</text>
</comment>
<comment type="catalytic activity">
    <reaction evidence="1">
        <text>(2R)-2,3-dihydroxy-3-methylbutanoate + NADP(+) = (2S)-2-acetolactate + NADPH + H(+)</text>
        <dbReference type="Rhea" id="RHEA:22068"/>
        <dbReference type="ChEBI" id="CHEBI:15378"/>
        <dbReference type="ChEBI" id="CHEBI:49072"/>
        <dbReference type="ChEBI" id="CHEBI:57783"/>
        <dbReference type="ChEBI" id="CHEBI:58349"/>
        <dbReference type="ChEBI" id="CHEBI:58476"/>
        <dbReference type="EC" id="1.1.1.86"/>
    </reaction>
</comment>
<comment type="catalytic activity">
    <reaction evidence="1">
        <text>(2R,3R)-2,3-dihydroxy-3-methylpentanoate + NADP(+) = (S)-2-ethyl-2-hydroxy-3-oxobutanoate + NADPH + H(+)</text>
        <dbReference type="Rhea" id="RHEA:13493"/>
        <dbReference type="ChEBI" id="CHEBI:15378"/>
        <dbReference type="ChEBI" id="CHEBI:49256"/>
        <dbReference type="ChEBI" id="CHEBI:49258"/>
        <dbReference type="ChEBI" id="CHEBI:57783"/>
        <dbReference type="ChEBI" id="CHEBI:58349"/>
        <dbReference type="EC" id="1.1.1.86"/>
    </reaction>
</comment>
<comment type="cofactor">
    <cofactor evidence="1">
        <name>Mg(2+)</name>
        <dbReference type="ChEBI" id="CHEBI:18420"/>
    </cofactor>
    <text evidence="1">Binds 2 magnesium ions per subunit.</text>
</comment>
<comment type="pathway">
    <text evidence="1">Amino-acid biosynthesis; L-isoleucine biosynthesis; L-isoleucine from 2-oxobutanoate: step 2/4.</text>
</comment>
<comment type="pathway">
    <text evidence="1">Amino-acid biosynthesis; L-valine biosynthesis; L-valine from pyruvate: step 2/4.</text>
</comment>
<comment type="similarity">
    <text evidence="1">Belongs to the ketol-acid reductoisomerase family.</text>
</comment>
<accession>A0QJC6</accession>
<reference key="1">
    <citation type="submission" date="2006-10" db="EMBL/GenBank/DDBJ databases">
        <authorList>
            <person name="Fleischmann R.D."/>
            <person name="Dodson R.J."/>
            <person name="Haft D.H."/>
            <person name="Merkel J.S."/>
            <person name="Nelson W.C."/>
            <person name="Fraser C.M."/>
        </authorList>
    </citation>
    <scope>NUCLEOTIDE SEQUENCE [LARGE SCALE GENOMIC DNA]</scope>
    <source>
        <strain>104</strain>
    </source>
</reference>
<sequence length="333" mass="36014">MFYDDDADLTIIQGRKVGVIGYGSQGHAHSLSLRDSGVQVKVGLKEGSKSRAKVSEQGLDVDTPAAVAKWADVIMLLAPDTAQADIFKNDIEPNLSDGDALFFGHGLNIHFGLIKPPAEVTVAMVAPKGPGHLVRRQFVDGKGVPCLIAVDQDPTGKGEALALSYAKAIGGTRAGVIKTTFKDETETDLFGEQAVLCGGTEELVKAGFDVMVEAGYPPEMAYFEVLHELKLIVDLMYEGGIARMNYSVSDTAEFGGYLSGPRVIDAGTKDRMREILRDIQNGDFVKKLVANVEGGNKQLEQLRKENAEHPIEVVGKRLRDLMSWVDRPITETA</sequence>
<protein>
    <recommendedName>
        <fullName evidence="1">Ketol-acid reductoisomerase (NADP(+))</fullName>
        <shortName evidence="1">KARI</shortName>
        <ecNumber evidence="1">1.1.1.86</ecNumber>
    </recommendedName>
    <alternativeName>
        <fullName evidence="1">Acetohydroxy-acid isomeroreductase</fullName>
        <shortName evidence="1">AHIR</shortName>
    </alternativeName>
    <alternativeName>
        <fullName evidence="1">Alpha-keto-beta-hydroxylacyl reductoisomerase</fullName>
    </alternativeName>
    <alternativeName>
        <fullName evidence="1">Ketol-acid reductoisomerase type 1</fullName>
    </alternativeName>
    <alternativeName>
        <fullName evidence="1">Ketol-acid reductoisomerase type I</fullName>
    </alternativeName>
</protein>
<dbReference type="EC" id="1.1.1.86" evidence="1"/>
<dbReference type="EMBL" id="CP000479">
    <property type="protein sequence ID" value="ABK68697.1"/>
    <property type="molecule type" value="Genomic_DNA"/>
</dbReference>
<dbReference type="RefSeq" id="WP_003878743.1">
    <property type="nucleotide sequence ID" value="NC_008595.1"/>
</dbReference>
<dbReference type="SMR" id="A0QJC6"/>
<dbReference type="KEGG" id="mav:MAV_3850"/>
<dbReference type="HOGENOM" id="CLU_033821_0_1_11"/>
<dbReference type="UniPathway" id="UPA00047">
    <property type="reaction ID" value="UER00056"/>
</dbReference>
<dbReference type="UniPathway" id="UPA00049">
    <property type="reaction ID" value="UER00060"/>
</dbReference>
<dbReference type="Proteomes" id="UP000001574">
    <property type="component" value="Chromosome"/>
</dbReference>
<dbReference type="GO" id="GO:0005829">
    <property type="term" value="C:cytosol"/>
    <property type="evidence" value="ECO:0007669"/>
    <property type="project" value="TreeGrafter"/>
</dbReference>
<dbReference type="GO" id="GO:0004455">
    <property type="term" value="F:ketol-acid reductoisomerase activity"/>
    <property type="evidence" value="ECO:0007669"/>
    <property type="project" value="UniProtKB-UniRule"/>
</dbReference>
<dbReference type="GO" id="GO:0000287">
    <property type="term" value="F:magnesium ion binding"/>
    <property type="evidence" value="ECO:0007669"/>
    <property type="project" value="UniProtKB-UniRule"/>
</dbReference>
<dbReference type="GO" id="GO:0050661">
    <property type="term" value="F:NADP binding"/>
    <property type="evidence" value="ECO:0007669"/>
    <property type="project" value="InterPro"/>
</dbReference>
<dbReference type="GO" id="GO:0009097">
    <property type="term" value="P:isoleucine biosynthetic process"/>
    <property type="evidence" value="ECO:0007669"/>
    <property type="project" value="UniProtKB-UniRule"/>
</dbReference>
<dbReference type="GO" id="GO:0009099">
    <property type="term" value="P:L-valine biosynthetic process"/>
    <property type="evidence" value="ECO:0007669"/>
    <property type="project" value="UniProtKB-UniRule"/>
</dbReference>
<dbReference type="FunFam" id="3.40.50.720:FF:000023">
    <property type="entry name" value="Ketol-acid reductoisomerase (NADP(+))"/>
    <property type="match status" value="1"/>
</dbReference>
<dbReference type="Gene3D" id="6.10.240.10">
    <property type="match status" value="1"/>
</dbReference>
<dbReference type="Gene3D" id="3.40.50.720">
    <property type="entry name" value="NAD(P)-binding Rossmann-like Domain"/>
    <property type="match status" value="1"/>
</dbReference>
<dbReference type="HAMAP" id="MF_00435">
    <property type="entry name" value="IlvC"/>
    <property type="match status" value="1"/>
</dbReference>
<dbReference type="InterPro" id="IPR008927">
    <property type="entry name" value="6-PGluconate_DH-like_C_sf"/>
</dbReference>
<dbReference type="InterPro" id="IPR013023">
    <property type="entry name" value="KARI"/>
</dbReference>
<dbReference type="InterPro" id="IPR000506">
    <property type="entry name" value="KARI_C"/>
</dbReference>
<dbReference type="InterPro" id="IPR013116">
    <property type="entry name" value="KARI_N"/>
</dbReference>
<dbReference type="InterPro" id="IPR014359">
    <property type="entry name" value="KARI_prok"/>
</dbReference>
<dbReference type="InterPro" id="IPR036291">
    <property type="entry name" value="NAD(P)-bd_dom_sf"/>
</dbReference>
<dbReference type="NCBIfam" id="TIGR00465">
    <property type="entry name" value="ilvC"/>
    <property type="match status" value="1"/>
</dbReference>
<dbReference type="NCBIfam" id="NF004017">
    <property type="entry name" value="PRK05479.1"/>
    <property type="match status" value="1"/>
</dbReference>
<dbReference type="NCBIfam" id="NF009940">
    <property type="entry name" value="PRK13403.1"/>
    <property type="match status" value="1"/>
</dbReference>
<dbReference type="PANTHER" id="PTHR21371">
    <property type="entry name" value="KETOL-ACID REDUCTOISOMERASE, MITOCHONDRIAL"/>
    <property type="match status" value="1"/>
</dbReference>
<dbReference type="PANTHER" id="PTHR21371:SF1">
    <property type="entry name" value="KETOL-ACID REDUCTOISOMERASE, MITOCHONDRIAL"/>
    <property type="match status" value="1"/>
</dbReference>
<dbReference type="Pfam" id="PF01450">
    <property type="entry name" value="KARI_C"/>
    <property type="match status" value="1"/>
</dbReference>
<dbReference type="Pfam" id="PF07991">
    <property type="entry name" value="KARI_N"/>
    <property type="match status" value="1"/>
</dbReference>
<dbReference type="PIRSF" id="PIRSF000116">
    <property type="entry name" value="IlvC_gammaproteo"/>
    <property type="match status" value="1"/>
</dbReference>
<dbReference type="SUPFAM" id="SSF48179">
    <property type="entry name" value="6-phosphogluconate dehydrogenase C-terminal domain-like"/>
    <property type="match status" value="1"/>
</dbReference>
<dbReference type="SUPFAM" id="SSF51735">
    <property type="entry name" value="NAD(P)-binding Rossmann-fold domains"/>
    <property type="match status" value="1"/>
</dbReference>
<dbReference type="PROSITE" id="PS51851">
    <property type="entry name" value="KARI_C"/>
    <property type="match status" value="1"/>
</dbReference>
<dbReference type="PROSITE" id="PS51850">
    <property type="entry name" value="KARI_N"/>
    <property type="match status" value="1"/>
</dbReference>
<proteinExistence type="inferred from homology"/>